<keyword id="KW-0119">Carbohydrate metabolism</keyword>
<keyword id="KW-0456">Lyase</keyword>
<proteinExistence type="inferred from homology"/>
<dbReference type="EC" id="4.2.1.126" evidence="1"/>
<dbReference type="EMBL" id="AL513382">
    <property type="protein sequence ID" value="CAD02773.1"/>
    <property type="molecule type" value="Genomic_DNA"/>
</dbReference>
<dbReference type="EMBL" id="AE014613">
    <property type="protein sequence ID" value="AAO68011.1"/>
    <property type="molecule type" value="Genomic_DNA"/>
</dbReference>
<dbReference type="RefSeq" id="NP_457100.1">
    <property type="nucleotide sequence ID" value="NC_003198.1"/>
</dbReference>
<dbReference type="RefSeq" id="WP_001048539.1">
    <property type="nucleotide sequence ID" value="NZ_UCTX01000011.1"/>
</dbReference>
<dbReference type="SMR" id="Q8Z4L2"/>
<dbReference type="STRING" id="220341.gene:17586707"/>
<dbReference type="KEGG" id="stt:t0286"/>
<dbReference type="KEGG" id="sty:STY2817"/>
<dbReference type="PATRIC" id="fig|220341.7.peg.2865"/>
<dbReference type="eggNOG" id="COG2103">
    <property type="taxonomic scope" value="Bacteria"/>
</dbReference>
<dbReference type="HOGENOM" id="CLU_049049_1_1_6"/>
<dbReference type="OMA" id="MDAVECP"/>
<dbReference type="OrthoDB" id="9813395at2"/>
<dbReference type="UniPathway" id="UPA00342"/>
<dbReference type="UniPathway" id="UPA00343"/>
<dbReference type="UniPathway" id="UPA00544"/>
<dbReference type="Proteomes" id="UP000000541">
    <property type="component" value="Chromosome"/>
</dbReference>
<dbReference type="Proteomes" id="UP000002670">
    <property type="component" value="Chromosome"/>
</dbReference>
<dbReference type="GO" id="GO:0097367">
    <property type="term" value="F:carbohydrate derivative binding"/>
    <property type="evidence" value="ECO:0007669"/>
    <property type="project" value="InterPro"/>
</dbReference>
<dbReference type="GO" id="GO:0016835">
    <property type="term" value="F:carbon-oxygen lyase activity"/>
    <property type="evidence" value="ECO:0007669"/>
    <property type="project" value="UniProtKB-UniRule"/>
</dbReference>
<dbReference type="GO" id="GO:0016803">
    <property type="term" value="F:ether hydrolase activity"/>
    <property type="evidence" value="ECO:0007669"/>
    <property type="project" value="TreeGrafter"/>
</dbReference>
<dbReference type="GO" id="GO:0097175">
    <property type="term" value="P:1,6-anhydro-N-acetyl-beta-muramic acid catabolic process"/>
    <property type="evidence" value="ECO:0007669"/>
    <property type="project" value="UniProtKB-UniRule"/>
</dbReference>
<dbReference type="GO" id="GO:0046348">
    <property type="term" value="P:amino sugar catabolic process"/>
    <property type="evidence" value="ECO:0007669"/>
    <property type="project" value="InterPro"/>
</dbReference>
<dbReference type="GO" id="GO:0097173">
    <property type="term" value="P:N-acetylmuramic acid catabolic process"/>
    <property type="evidence" value="ECO:0007669"/>
    <property type="project" value="UniProtKB-UniPathway"/>
</dbReference>
<dbReference type="GO" id="GO:0009254">
    <property type="term" value="P:peptidoglycan turnover"/>
    <property type="evidence" value="ECO:0007669"/>
    <property type="project" value="UniProtKB-UniRule"/>
</dbReference>
<dbReference type="CDD" id="cd05007">
    <property type="entry name" value="SIS_Etherase"/>
    <property type="match status" value="1"/>
</dbReference>
<dbReference type="FunFam" id="1.10.8.1080:FF:000001">
    <property type="entry name" value="N-acetylmuramic acid 6-phosphate etherase"/>
    <property type="match status" value="1"/>
</dbReference>
<dbReference type="FunFam" id="3.40.50.10490:FF:000014">
    <property type="entry name" value="N-acetylmuramic acid 6-phosphate etherase"/>
    <property type="match status" value="1"/>
</dbReference>
<dbReference type="Gene3D" id="1.10.8.1080">
    <property type="match status" value="1"/>
</dbReference>
<dbReference type="Gene3D" id="3.40.50.10490">
    <property type="entry name" value="Glucose-6-phosphate isomerase like protein, domain 1"/>
    <property type="match status" value="1"/>
</dbReference>
<dbReference type="HAMAP" id="MF_00068">
    <property type="entry name" value="MurQ"/>
    <property type="match status" value="1"/>
</dbReference>
<dbReference type="InterPro" id="IPR005488">
    <property type="entry name" value="Etherase_MurQ"/>
</dbReference>
<dbReference type="InterPro" id="IPR005486">
    <property type="entry name" value="Glucokinase_regulatory_CS"/>
</dbReference>
<dbReference type="InterPro" id="IPR040190">
    <property type="entry name" value="MURQ/GCKR"/>
</dbReference>
<dbReference type="InterPro" id="IPR001347">
    <property type="entry name" value="SIS_dom"/>
</dbReference>
<dbReference type="InterPro" id="IPR046348">
    <property type="entry name" value="SIS_dom_sf"/>
</dbReference>
<dbReference type="NCBIfam" id="TIGR00274">
    <property type="entry name" value="N-acetylmuramic acid 6-phosphate etherase"/>
    <property type="match status" value="1"/>
</dbReference>
<dbReference type="NCBIfam" id="NF003915">
    <property type="entry name" value="PRK05441.1"/>
    <property type="match status" value="1"/>
</dbReference>
<dbReference type="NCBIfam" id="NF009222">
    <property type="entry name" value="PRK12570.1"/>
    <property type="match status" value="1"/>
</dbReference>
<dbReference type="PANTHER" id="PTHR10088">
    <property type="entry name" value="GLUCOKINASE REGULATORY PROTEIN"/>
    <property type="match status" value="1"/>
</dbReference>
<dbReference type="PANTHER" id="PTHR10088:SF5">
    <property type="entry name" value="N-ACETYLMURAMIC ACID 6-PHOSPHATE ETHERASE"/>
    <property type="match status" value="1"/>
</dbReference>
<dbReference type="Pfam" id="PF22645">
    <property type="entry name" value="GKRP_SIS_N"/>
    <property type="match status" value="1"/>
</dbReference>
<dbReference type="SUPFAM" id="SSF53697">
    <property type="entry name" value="SIS domain"/>
    <property type="match status" value="1"/>
</dbReference>
<dbReference type="PROSITE" id="PS01272">
    <property type="entry name" value="GCKR"/>
    <property type="match status" value="1"/>
</dbReference>
<dbReference type="PROSITE" id="PS51464">
    <property type="entry name" value="SIS"/>
    <property type="match status" value="1"/>
</dbReference>
<reference key="1">
    <citation type="journal article" date="2001" name="Nature">
        <title>Complete genome sequence of a multiple drug resistant Salmonella enterica serovar Typhi CT18.</title>
        <authorList>
            <person name="Parkhill J."/>
            <person name="Dougan G."/>
            <person name="James K.D."/>
            <person name="Thomson N.R."/>
            <person name="Pickard D."/>
            <person name="Wain J."/>
            <person name="Churcher C.M."/>
            <person name="Mungall K.L."/>
            <person name="Bentley S.D."/>
            <person name="Holden M.T.G."/>
            <person name="Sebaihia M."/>
            <person name="Baker S."/>
            <person name="Basham D."/>
            <person name="Brooks K."/>
            <person name="Chillingworth T."/>
            <person name="Connerton P."/>
            <person name="Cronin A."/>
            <person name="Davis P."/>
            <person name="Davies R.M."/>
            <person name="Dowd L."/>
            <person name="White N."/>
            <person name="Farrar J."/>
            <person name="Feltwell T."/>
            <person name="Hamlin N."/>
            <person name="Haque A."/>
            <person name="Hien T.T."/>
            <person name="Holroyd S."/>
            <person name="Jagels K."/>
            <person name="Krogh A."/>
            <person name="Larsen T.S."/>
            <person name="Leather S."/>
            <person name="Moule S."/>
            <person name="O'Gaora P."/>
            <person name="Parry C."/>
            <person name="Quail M.A."/>
            <person name="Rutherford K.M."/>
            <person name="Simmonds M."/>
            <person name="Skelton J."/>
            <person name="Stevens K."/>
            <person name="Whitehead S."/>
            <person name="Barrell B.G."/>
        </authorList>
    </citation>
    <scope>NUCLEOTIDE SEQUENCE [LARGE SCALE GENOMIC DNA]</scope>
    <source>
        <strain>CT18</strain>
    </source>
</reference>
<reference key="2">
    <citation type="journal article" date="2003" name="J. Bacteriol.">
        <title>Comparative genomics of Salmonella enterica serovar Typhi strains Ty2 and CT18.</title>
        <authorList>
            <person name="Deng W."/>
            <person name="Liou S.-R."/>
            <person name="Plunkett G. III"/>
            <person name="Mayhew G.F."/>
            <person name="Rose D.J."/>
            <person name="Burland V."/>
            <person name="Kodoyianni V."/>
            <person name="Schwartz D.C."/>
            <person name="Blattner F.R."/>
        </authorList>
    </citation>
    <scope>NUCLEOTIDE SEQUENCE [LARGE SCALE GENOMIC DNA]</scope>
    <source>
        <strain>ATCC 700931 / Ty2</strain>
    </source>
</reference>
<organism>
    <name type="scientific">Salmonella typhi</name>
    <dbReference type="NCBI Taxonomy" id="90370"/>
    <lineage>
        <taxon>Bacteria</taxon>
        <taxon>Pseudomonadati</taxon>
        <taxon>Pseudomonadota</taxon>
        <taxon>Gammaproteobacteria</taxon>
        <taxon>Enterobacterales</taxon>
        <taxon>Enterobacteriaceae</taxon>
        <taxon>Salmonella</taxon>
    </lineage>
</organism>
<feature type="chain" id="PRO_0000214832" description="N-acetylmuramic acid 6-phosphate etherase">
    <location>
        <begin position="1"/>
        <end position="297"/>
    </location>
</feature>
<feature type="domain" description="SIS" evidence="1">
    <location>
        <begin position="55"/>
        <end position="218"/>
    </location>
</feature>
<feature type="active site" description="Proton donor" evidence="1">
    <location>
        <position position="83"/>
    </location>
</feature>
<feature type="active site" evidence="1">
    <location>
        <position position="114"/>
    </location>
</feature>
<gene>
    <name evidence="1" type="primary">murQ</name>
    <name type="synonym">yfeU</name>
    <name type="ordered locus">STY2817</name>
    <name type="ordered locus">t0286</name>
</gene>
<sequence>MNLGTLVSETRNPQTMDLDALSTPELVKRFNEQDTLVAEAVKATLPDVARAVDAAAAALKSGGRIIYMGAGTSGRLGVLDASECPPTFGVPHGLVVGLIAGGPGALLKAVEGAEDSQQAGEDDLVALNLQEQDLVVGLAASGRTPYVIGGLRYARQSGCTTVAVSCNPDSPIAREANIAISPVVGPEALTGSTRLKSGTAQKMVLNMISTGAMVKFGKVYQNLMVDMKATNVKLVDRACRMVVEATGIGREEAETLLKQTDFEVKPAILMALTGLDAAAAREKLAAHQGFLRAALEH</sequence>
<name>MURQ_SALTI</name>
<evidence type="ECO:0000255" key="1">
    <source>
        <dbReference type="HAMAP-Rule" id="MF_00068"/>
    </source>
</evidence>
<accession>Q8Z4L2</accession>
<comment type="function">
    <text evidence="1">Specifically catalyzes the cleavage of the D-lactyl ether substituent of MurNAc 6-phosphate, producing GlcNAc 6-phosphate and D-lactate. Together with AnmK, is also required for the utilization of anhydro-N-acetylmuramic acid (anhMurNAc) either imported from the medium or derived from its own cell wall murein, and thus plays a role in cell wall recycling.</text>
</comment>
<comment type="catalytic activity">
    <reaction evidence="1">
        <text>N-acetyl-D-muramate 6-phosphate + H2O = N-acetyl-D-glucosamine 6-phosphate + (R)-lactate</text>
        <dbReference type="Rhea" id="RHEA:26410"/>
        <dbReference type="ChEBI" id="CHEBI:15377"/>
        <dbReference type="ChEBI" id="CHEBI:16004"/>
        <dbReference type="ChEBI" id="CHEBI:57513"/>
        <dbReference type="ChEBI" id="CHEBI:58722"/>
        <dbReference type="EC" id="4.2.1.126"/>
    </reaction>
</comment>
<comment type="pathway">
    <text evidence="1">Amino-sugar metabolism; 1,6-anhydro-N-acetylmuramate degradation.</text>
</comment>
<comment type="pathway">
    <text evidence="1">Amino-sugar metabolism; N-acetylmuramate degradation.</text>
</comment>
<comment type="pathway">
    <text evidence="1">Cell wall biogenesis; peptidoglycan recycling.</text>
</comment>
<comment type="subunit">
    <text evidence="1">Homodimer.</text>
</comment>
<comment type="induction">
    <text evidence="1">Induced by MurNAc 6-phosphate that releases the repressor MurR from the DNA. Repressed by MurR in the absence of MurNAc 6-phosphate.</text>
</comment>
<comment type="miscellaneous">
    <text evidence="1">A lyase-type mechanism (elimination/hydration) is suggested for the cleavage of the lactyl ether bond of MurNAc 6-phosphate, with the formation of an alpha,beta-unsaturated aldehyde intermediate with (E)-stereochemistry, followed by the syn addition of water to give product.</text>
</comment>
<comment type="similarity">
    <text evidence="1">Belongs to the GCKR-like family. MurNAc-6-P etherase subfamily.</text>
</comment>
<protein>
    <recommendedName>
        <fullName evidence="1">N-acetylmuramic acid 6-phosphate etherase</fullName>
        <shortName evidence="1">MurNAc-6-P etherase</shortName>
        <ecNumber evidence="1">4.2.1.126</ecNumber>
    </recommendedName>
    <alternativeName>
        <fullName evidence="1">N-acetylmuramic acid 6-phosphate hydrolase</fullName>
    </alternativeName>
    <alternativeName>
        <fullName evidence="1">N-acetylmuramic acid 6-phosphate lyase</fullName>
    </alternativeName>
</protein>